<keyword id="KW-0028">Amino-acid biosynthesis</keyword>
<keyword id="KW-0963">Cytoplasm</keyword>
<keyword id="KW-0220">Diaminopimelate biosynthesis</keyword>
<keyword id="KW-0456">Lyase</keyword>
<keyword id="KW-0457">Lysine biosynthesis</keyword>
<keyword id="KW-0704">Schiff base</keyword>
<feature type="chain" id="PRO_1000124029" description="4-hydroxy-tetrahydrodipicolinate synthase">
    <location>
        <begin position="1"/>
        <end position="292"/>
    </location>
</feature>
<feature type="active site" description="Proton donor/acceptor" evidence="1">
    <location>
        <position position="133"/>
    </location>
</feature>
<feature type="active site" description="Schiff-base intermediate with substrate" evidence="1">
    <location>
        <position position="161"/>
    </location>
</feature>
<feature type="binding site" evidence="1">
    <location>
        <position position="45"/>
    </location>
    <ligand>
        <name>pyruvate</name>
        <dbReference type="ChEBI" id="CHEBI:15361"/>
    </ligand>
</feature>
<feature type="binding site" evidence="1">
    <location>
        <position position="203"/>
    </location>
    <ligand>
        <name>pyruvate</name>
        <dbReference type="ChEBI" id="CHEBI:15361"/>
    </ligand>
</feature>
<feature type="site" description="Part of a proton relay during catalysis" evidence="1">
    <location>
        <position position="44"/>
    </location>
</feature>
<feature type="site" description="Part of a proton relay during catalysis" evidence="1">
    <location>
        <position position="107"/>
    </location>
</feature>
<protein>
    <recommendedName>
        <fullName evidence="1">4-hydroxy-tetrahydrodipicolinate synthase</fullName>
        <shortName evidence="1">HTPA synthase</shortName>
        <ecNumber evidence="1">4.3.3.7</ecNumber>
    </recommendedName>
</protein>
<reference key="1">
    <citation type="journal article" date="2009" name="PLoS Genet.">
        <title>Organised genome dynamics in the Escherichia coli species results in highly diverse adaptive paths.</title>
        <authorList>
            <person name="Touchon M."/>
            <person name="Hoede C."/>
            <person name="Tenaillon O."/>
            <person name="Barbe V."/>
            <person name="Baeriswyl S."/>
            <person name="Bidet P."/>
            <person name="Bingen E."/>
            <person name="Bonacorsi S."/>
            <person name="Bouchier C."/>
            <person name="Bouvet O."/>
            <person name="Calteau A."/>
            <person name="Chiapello H."/>
            <person name="Clermont O."/>
            <person name="Cruveiller S."/>
            <person name="Danchin A."/>
            <person name="Diard M."/>
            <person name="Dossat C."/>
            <person name="Karoui M.E."/>
            <person name="Frapy E."/>
            <person name="Garry L."/>
            <person name="Ghigo J.M."/>
            <person name="Gilles A.M."/>
            <person name="Johnson J."/>
            <person name="Le Bouguenec C."/>
            <person name="Lescat M."/>
            <person name="Mangenot S."/>
            <person name="Martinez-Jehanne V."/>
            <person name="Matic I."/>
            <person name="Nassif X."/>
            <person name="Oztas S."/>
            <person name="Petit M.A."/>
            <person name="Pichon C."/>
            <person name="Rouy Z."/>
            <person name="Ruf C.S."/>
            <person name="Schneider D."/>
            <person name="Tourret J."/>
            <person name="Vacherie B."/>
            <person name="Vallenet D."/>
            <person name="Medigue C."/>
            <person name="Rocha E.P.C."/>
            <person name="Denamur E."/>
        </authorList>
    </citation>
    <scope>NUCLEOTIDE SEQUENCE [LARGE SCALE GENOMIC DNA]</scope>
    <source>
        <strain>IAI39 / ExPEC</strain>
    </source>
</reference>
<dbReference type="EC" id="4.3.3.7" evidence="1"/>
<dbReference type="EMBL" id="CU928164">
    <property type="protein sequence ID" value="CAR18741.1"/>
    <property type="molecule type" value="Genomic_DNA"/>
</dbReference>
<dbReference type="RefSeq" id="WP_001295469.1">
    <property type="nucleotide sequence ID" value="NC_011750.1"/>
</dbReference>
<dbReference type="RefSeq" id="YP_002408565.1">
    <property type="nucleotide sequence ID" value="NC_011750.1"/>
</dbReference>
<dbReference type="SMR" id="B7NQL6"/>
<dbReference type="STRING" id="585057.ECIAI39_2617"/>
<dbReference type="GeneID" id="93774660"/>
<dbReference type="KEGG" id="ect:ECIAI39_2617"/>
<dbReference type="PATRIC" id="fig|585057.6.peg.2723"/>
<dbReference type="HOGENOM" id="CLU_049343_7_1_6"/>
<dbReference type="UniPathway" id="UPA00034">
    <property type="reaction ID" value="UER00017"/>
</dbReference>
<dbReference type="Proteomes" id="UP000000749">
    <property type="component" value="Chromosome"/>
</dbReference>
<dbReference type="GO" id="GO:0005829">
    <property type="term" value="C:cytosol"/>
    <property type="evidence" value="ECO:0007669"/>
    <property type="project" value="TreeGrafter"/>
</dbReference>
<dbReference type="GO" id="GO:0008840">
    <property type="term" value="F:4-hydroxy-tetrahydrodipicolinate synthase activity"/>
    <property type="evidence" value="ECO:0007669"/>
    <property type="project" value="UniProtKB-UniRule"/>
</dbReference>
<dbReference type="GO" id="GO:0019877">
    <property type="term" value="P:diaminopimelate biosynthetic process"/>
    <property type="evidence" value="ECO:0007669"/>
    <property type="project" value="UniProtKB-UniRule"/>
</dbReference>
<dbReference type="GO" id="GO:0009089">
    <property type="term" value="P:lysine biosynthetic process via diaminopimelate"/>
    <property type="evidence" value="ECO:0007669"/>
    <property type="project" value="UniProtKB-UniRule"/>
</dbReference>
<dbReference type="CDD" id="cd00950">
    <property type="entry name" value="DHDPS"/>
    <property type="match status" value="1"/>
</dbReference>
<dbReference type="FunFam" id="3.20.20.70:FF:000046">
    <property type="entry name" value="4-hydroxy-tetrahydrodipicolinate synthase"/>
    <property type="match status" value="1"/>
</dbReference>
<dbReference type="Gene3D" id="3.20.20.70">
    <property type="entry name" value="Aldolase class I"/>
    <property type="match status" value="1"/>
</dbReference>
<dbReference type="HAMAP" id="MF_00418">
    <property type="entry name" value="DapA"/>
    <property type="match status" value="1"/>
</dbReference>
<dbReference type="InterPro" id="IPR013785">
    <property type="entry name" value="Aldolase_TIM"/>
</dbReference>
<dbReference type="InterPro" id="IPR005263">
    <property type="entry name" value="DapA"/>
</dbReference>
<dbReference type="InterPro" id="IPR002220">
    <property type="entry name" value="DapA-like"/>
</dbReference>
<dbReference type="InterPro" id="IPR020625">
    <property type="entry name" value="Schiff_base-form_aldolases_AS"/>
</dbReference>
<dbReference type="InterPro" id="IPR020624">
    <property type="entry name" value="Schiff_base-form_aldolases_CS"/>
</dbReference>
<dbReference type="NCBIfam" id="TIGR00674">
    <property type="entry name" value="dapA"/>
    <property type="match status" value="1"/>
</dbReference>
<dbReference type="PANTHER" id="PTHR12128:SF66">
    <property type="entry name" value="4-HYDROXY-2-OXOGLUTARATE ALDOLASE, MITOCHONDRIAL"/>
    <property type="match status" value="1"/>
</dbReference>
<dbReference type="PANTHER" id="PTHR12128">
    <property type="entry name" value="DIHYDRODIPICOLINATE SYNTHASE"/>
    <property type="match status" value="1"/>
</dbReference>
<dbReference type="Pfam" id="PF00701">
    <property type="entry name" value="DHDPS"/>
    <property type="match status" value="1"/>
</dbReference>
<dbReference type="PIRSF" id="PIRSF001365">
    <property type="entry name" value="DHDPS"/>
    <property type="match status" value="1"/>
</dbReference>
<dbReference type="PRINTS" id="PR00146">
    <property type="entry name" value="DHPICSNTHASE"/>
</dbReference>
<dbReference type="SMART" id="SM01130">
    <property type="entry name" value="DHDPS"/>
    <property type="match status" value="1"/>
</dbReference>
<dbReference type="SUPFAM" id="SSF51569">
    <property type="entry name" value="Aldolase"/>
    <property type="match status" value="1"/>
</dbReference>
<dbReference type="PROSITE" id="PS00665">
    <property type="entry name" value="DHDPS_1"/>
    <property type="match status" value="1"/>
</dbReference>
<dbReference type="PROSITE" id="PS00666">
    <property type="entry name" value="DHDPS_2"/>
    <property type="match status" value="1"/>
</dbReference>
<comment type="function">
    <text evidence="1">Catalyzes the condensation of (S)-aspartate-beta-semialdehyde [(S)-ASA] and pyruvate to 4-hydroxy-tetrahydrodipicolinate (HTPA).</text>
</comment>
<comment type="catalytic activity">
    <reaction evidence="1">
        <text>L-aspartate 4-semialdehyde + pyruvate = (2S,4S)-4-hydroxy-2,3,4,5-tetrahydrodipicolinate + H2O + H(+)</text>
        <dbReference type="Rhea" id="RHEA:34171"/>
        <dbReference type="ChEBI" id="CHEBI:15361"/>
        <dbReference type="ChEBI" id="CHEBI:15377"/>
        <dbReference type="ChEBI" id="CHEBI:15378"/>
        <dbReference type="ChEBI" id="CHEBI:67139"/>
        <dbReference type="ChEBI" id="CHEBI:537519"/>
        <dbReference type="EC" id="4.3.3.7"/>
    </reaction>
</comment>
<comment type="pathway">
    <text evidence="1">Amino-acid biosynthesis; L-lysine biosynthesis via DAP pathway; (S)-tetrahydrodipicolinate from L-aspartate: step 3/4.</text>
</comment>
<comment type="subunit">
    <text evidence="1">Homotetramer; dimer of dimers.</text>
</comment>
<comment type="subcellular location">
    <subcellularLocation>
        <location evidence="1">Cytoplasm</location>
    </subcellularLocation>
</comment>
<comment type="similarity">
    <text evidence="1">Belongs to the DapA family.</text>
</comment>
<comment type="caution">
    <text evidence="2">Was originally thought to be a dihydrodipicolinate synthase (DHDPS), catalyzing the condensation of (S)-aspartate-beta-semialdehyde [(S)-ASA] and pyruvate to dihydrodipicolinate (DHDP). However, it was shown in E.coli that the product of the enzymatic reaction is not dihydrodipicolinate but in fact (4S)-4-hydroxy-2,3,4,5-tetrahydro-(2S)-dipicolinic acid (HTPA), and that the consecutive dehydration reaction leading to DHDP is not spontaneous but catalyzed by DapB.</text>
</comment>
<gene>
    <name evidence="1" type="primary">dapA</name>
    <name type="ordered locus">ECIAI39_2617</name>
</gene>
<sequence length="292" mass="31284">MFTGSIVAIVTPMDEKGNVCRASLKKLIDYHVASGTSAIVSVGTTGESATLNHDEHADVVMMTLELADGRIPVIAGTGANATAEAISLTQRFNDSGIVGCLTVTPYYNRPSQEGLYQHFKAIAEHTDLPQILYNVPSRTGCDLLPETVGRLAKVKNIIGIKEATGNLTRVNQIKELVSDDFVLLSGDDASALDFMQLGGHGVISVTANVAARDMAQMCKLAAEGHFAEARVINQRLMPLHNKLFVEPNPIPVKWACKELGLVATDTLRLPMTPITDSGRETVRAALKHAGLL</sequence>
<evidence type="ECO:0000255" key="1">
    <source>
        <dbReference type="HAMAP-Rule" id="MF_00418"/>
    </source>
</evidence>
<evidence type="ECO:0000305" key="2"/>
<proteinExistence type="inferred from homology"/>
<name>DAPA_ECO7I</name>
<accession>B7NQL6</accession>
<organism>
    <name type="scientific">Escherichia coli O7:K1 (strain IAI39 / ExPEC)</name>
    <dbReference type="NCBI Taxonomy" id="585057"/>
    <lineage>
        <taxon>Bacteria</taxon>
        <taxon>Pseudomonadati</taxon>
        <taxon>Pseudomonadota</taxon>
        <taxon>Gammaproteobacteria</taxon>
        <taxon>Enterobacterales</taxon>
        <taxon>Enterobacteriaceae</taxon>
        <taxon>Escherichia</taxon>
    </lineage>
</organism>